<feature type="signal peptide" evidence="2">
    <location>
        <begin position="1"/>
        <end position="24"/>
    </location>
</feature>
<feature type="chain" id="PRO_0000034280" description="Thiol:disulfide interchange protein DsbG">
    <location>
        <begin position="25"/>
        <end position="256"/>
    </location>
</feature>
<feature type="disulfide bond" description="Redox-active" evidence="1">
    <location>
        <begin position="134"/>
        <end position="137"/>
    </location>
</feature>
<reference key="1">
    <citation type="journal article" date="2000" name="Nature">
        <title>Complete genome sequence of Pseudomonas aeruginosa PAO1, an opportunistic pathogen.</title>
        <authorList>
            <person name="Stover C.K."/>
            <person name="Pham X.-Q.T."/>
            <person name="Erwin A.L."/>
            <person name="Mizoguchi S.D."/>
            <person name="Warrener P."/>
            <person name="Hickey M.J."/>
            <person name="Brinkman F.S.L."/>
            <person name="Hufnagle W.O."/>
            <person name="Kowalik D.J."/>
            <person name="Lagrou M."/>
            <person name="Garber R.L."/>
            <person name="Goltry L."/>
            <person name="Tolentino E."/>
            <person name="Westbrock-Wadman S."/>
            <person name="Yuan Y."/>
            <person name="Brody L.L."/>
            <person name="Coulter S.N."/>
            <person name="Folger K.R."/>
            <person name="Kas A."/>
            <person name="Larbig K."/>
            <person name="Lim R.M."/>
            <person name="Smith K.A."/>
            <person name="Spencer D.H."/>
            <person name="Wong G.K.-S."/>
            <person name="Wu Z."/>
            <person name="Paulsen I.T."/>
            <person name="Reizer J."/>
            <person name="Saier M.H. Jr."/>
            <person name="Hancock R.E.W."/>
            <person name="Lory S."/>
            <person name="Olson M.V."/>
        </authorList>
    </citation>
    <scope>NUCLEOTIDE SEQUENCE [LARGE SCALE GENOMIC DNA]</scope>
    <source>
        <strain>ATCC 15692 / DSM 22644 / CIP 104116 / JCM 14847 / LMG 12228 / 1C / PRS 101 / PAO1</strain>
    </source>
</reference>
<gene>
    <name type="primary">dsbG</name>
    <name type="ordered locus">PA2476</name>
</gene>
<sequence length="256" mass="28053">MRLPRNLITLGLGLTLLNAGLATAAEELPAPIRMVQEKGARILGSFDAPDGLRGYAAEYQNQGMALYLTPDGKHVLTGHLFDAQGKDLSREPLERLVYAPLAKEMWQKMEQSAWIADGRADAPRVVYLFSDPNCPYCTMFWEQARPWVDAGKVQLRHIMVGIIREDSEAKSAALLASKDPQKALHDHEQAGKASTLKPLAKIPAAVRKQLAGNMELMESMGAAATPAIFYLNAEGRMQQQQGAPQPDQLAEILGPR</sequence>
<accession>Q9I106</accession>
<evidence type="ECO:0000250" key="1"/>
<evidence type="ECO:0000255" key="2"/>
<evidence type="ECO:0000305" key="3"/>
<keyword id="KW-1015">Disulfide bond</keyword>
<keyword id="KW-0574">Periplasm</keyword>
<keyword id="KW-0676">Redox-active center</keyword>
<keyword id="KW-1185">Reference proteome</keyword>
<keyword id="KW-0732">Signal</keyword>
<comment type="function">
    <text evidence="1">Involved in disulfide bond formation. Functions probably as a disulfide isomerase with a narrower substrate specificity than DsbC. DsbG is maintained in a reduced state by DsbD (By similarity).</text>
</comment>
<comment type="subunit">
    <text evidence="1">Homodimer.</text>
</comment>
<comment type="subcellular location">
    <subcellularLocation>
        <location evidence="1">Periplasm</location>
    </subcellularLocation>
</comment>
<comment type="similarity">
    <text evidence="3">Belongs to the thioredoxin family. DsbC subfamily.</text>
</comment>
<proteinExistence type="inferred from homology"/>
<organism>
    <name type="scientific">Pseudomonas aeruginosa (strain ATCC 15692 / DSM 22644 / CIP 104116 / JCM 14847 / LMG 12228 / 1C / PRS 101 / PAO1)</name>
    <dbReference type="NCBI Taxonomy" id="208964"/>
    <lineage>
        <taxon>Bacteria</taxon>
        <taxon>Pseudomonadati</taxon>
        <taxon>Pseudomonadota</taxon>
        <taxon>Gammaproteobacteria</taxon>
        <taxon>Pseudomonadales</taxon>
        <taxon>Pseudomonadaceae</taxon>
        <taxon>Pseudomonas</taxon>
    </lineage>
</organism>
<name>DSBG_PSEAE</name>
<dbReference type="EMBL" id="AE004091">
    <property type="protein sequence ID" value="AAG05864.1"/>
    <property type="molecule type" value="Genomic_DNA"/>
</dbReference>
<dbReference type="PIR" id="D83336">
    <property type="entry name" value="D83336"/>
</dbReference>
<dbReference type="RefSeq" id="NP_251166.1">
    <property type="nucleotide sequence ID" value="NC_002516.2"/>
</dbReference>
<dbReference type="RefSeq" id="WP_003089790.1">
    <property type="nucleotide sequence ID" value="NZ_QZGE01000008.1"/>
</dbReference>
<dbReference type="SMR" id="Q9I106"/>
<dbReference type="FunCoup" id="Q9I106">
    <property type="interactions" value="114"/>
</dbReference>
<dbReference type="STRING" id="208964.PA2476"/>
<dbReference type="PaxDb" id="208964-PA2476"/>
<dbReference type="GeneID" id="882549"/>
<dbReference type="KEGG" id="pae:PA2476"/>
<dbReference type="PATRIC" id="fig|208964.12.peg.2587"/>
<dbReference type="PseudoCAP" id="PA2476"/>
<dbReference type="HOGENOM" id="CLU_080090_0_0_6"/>
<dbReference type="InParanoid" id="Q9I106"/>
<dbReference type="OrthoDB" id="5298214at2"/>
<dbReference type="PhylomeDB" id="Q9I106"/>
<dbReference type="BioCyc" id="PAER208964:G1FZ6-2511-MONOMER"/>
<dbReference type="Proteomes" id="UP000002438">
    <property type="component" value="Chromosome"/>
</dbReference>
<dbReference type="GO" id="GO:0042597">
    <property type="term" value="C:periplasmic space"/>
    <property type="evidence" value="ECO:0007669"/>
    <property type="project" value="UniProtKB-SubCell"/>
</dbReference>
<dbReference type="CDD" id="cd03020">
    <property type="entry name" value="DsbA_DsbC_DsbG"/>
    <property type="match status" value="1"/>
</dbReference>
<dbReference type="Gene3D" id="3.10.450.70">
    <property type="entry name" value="Disulphide bond isomerase, DsbC/G, N-terminal"/>
    <property type="match status" value="1"/>
</dbReference>
<dbReference type="Gene3D" id="3.40.30.10">
    <property type="entry name" value="Glutaredoxin"/>
    <property type="match status" value="1"/>
</dbReference>
<dbReference type="InterPro" id="IPR033954">
    <property type="entry name" value="DiS-bond_Isoase_DsbC/G"/>
</dbReference>
<dbReference type="InterPro" id="IPR018950">
    <property type="entry name" value="DiS-bond_isomerase_DsbC/G_N"/>
</dbReference>
<dbReference type="InterPro" id="IPR009094">
    <property type="entry name" value="DiS-bond_isomerase_DsbC/G_N_sf"/>
</dbReference>
<dbReference type="InterPro" id="IPR051470">
    <property type="entry name" value="Thiol:disulfide_interchange"/>
</dbReference>
<dbReference type="InterPro" id="IPR012336">
    <property type="entry name" value="Thioredoxin-like_fold"/>
</dbReference>
<dbReference type="InterPro" id="IPR036249">
    <property type="entry name" value="Thioredoxin-like_sf"/>
</dbReference>
<dbReference type="NCBIfam" id="NF008657">
    <property type="entry name" value="PRK11657.1"/>
    <property type="match status" value="1"/>
</dbReference>
<dbReference type="PANTHER" id="PTHR35272">
    <property type="entry name" value="THIOL:DISULFIDE INTERCHANGE PROTEIN DSBC-RELATED"/>
    <property type="match status" value="1"/>
</dbReference>
<dbReference type="PANTHER" id="PTHR35272:SF4">
    <property type="entry name" value="THIOL:DISULFIDE INTERCHANGE PROTEIN DSBG"/>
    <property type="match status" value="1"/>
</dbReference>
<dbReference type="Pfam" id="PF10411">
    <property type="entry name" value="DsbC_N"/>
    <property type="match status" value="1"/>
</dbReference>
<dbReference type="Pfam" id="PF13098">
    <property type="entry name" value="Thioredoxin_2"/>
    <property type="match status" value="1"/>
</dbReference>
<dbReference type="SUPFAM" id="SSF54423">
    <property type="entry name" value="DsbC/DsbG N-terminal domain-like"/>
    <property type="match status" value="1"/>
</dbReference>
<dbReference type="SUPFAM" id="SSF52833">
    <property type="entry name" value="Thioredoxin-like"/>
    <property type="match status" value="1"/>
</dbReference>
<protein>
    <recommendedName>
        <fullName>Thiol:disulfide interchange protein DsbG</fullName>
    </recommendedName>
</protein>